<comment type="function">
    <text evidence="2 3">Transcriptional regulator which displays a remarkable functional diversity in the regulation of cellular responses (By similarity). Regulates transcription of IFN and IFN-inducible genes, host response to viral and bacterial infections, regulation of many genes expressed during hematopoiesis, inflammation, immune responses and cell proliferation and differentiation, regulation of the cell cycle and induction of growth arrest and programmed cell death following DNA damage (By similarity). Stimulates both innate and acquired immune responses through the activation of specific target genes and can act as a transcriptional activator and repressor regulating target genes by binding to an interferon-stimulated response element (ISRE) in their promoters (By similarity). Has an essentail role in IFNG-dependent immunity to mycobacteria (By similarity). Binds to a consensus sequence in gene promoters (By similarity). Its target genes for transcriptional activation activity include: genes involved in anti-viral response, such as IFN-alpha/beta, RIGI, TNFSF10/TRAIL, ZBP1, OAS1/2, PIAS1/GBP, EIF2AK2/PKR and RSAD2/viperin; antibacterial response, such as GBP2, GBP5 and NOS2/INOS; anti-proliferative response, such as p53/TP53, LOX and CDKN1A; apoptosis, such as BBC3/PUMA, CASP1, CASP7 and CASP8; immune response, such as IL7, IL12A/B and IL15, PTGS2/COX2 and CYBB; DNA damage responses and DNA repair, such as POLQ/POLH; MHC class I expression, such as TAP1, PSMB9/LMP2, PSME1/PA28A, PSME2/PA28B and B2M and MHC class II expression, such as CIITA; metabolic enzymes, such as ACOD1/IRG1 (By similarity). Represses genes involved in anti-proliferative response, such as BIRC5/survivin, CCNB1, CCNE1, CDK1, CDK2 and CDK4 and in immune response, such as FOXP3, IL4, ANXA2 and TLR4 (By similarity). Stimulates p53/TP53-dependent transcription through enhanced recruitment of EP300 leading to increased acetylation of p53/TP53 (By similarity). Plays an important role in immune response directly affecting NK maturation and activity, macrophage production of IL12, Th1 development and maturation of CD8+ T-cells (By similarity). Also implicated in the differentiation and maturation of dendritic cells and in the suppression of regulatory T (Treg) cells development (By similarity). Acts as a tumor suppressor and plays a role not only in antagonism of tumor cell growth but also in stimulating an immune response against tumor cells (By similarity).</text>
</comment>
<comment type="activity regulation">
    <text evidence="3">Activated by MYD88.</text>
</comment>
<comment type="subunit">
    <text evidence="2 3">Monomer (By similarity). Homodimer (By similarity). Interacts with EP300 (By similarity). Interacts with MYD88 (By similarity). Interacts with PIAS3 (By similarity). Interacts with SPOP (By similarity).</text>
</comment>
<comment type="subcellular location">
    <subcellularLocation>
        <location evidence="3">Nucleus</location>
    </subcellularLocation>
    <subcellularLocation>
        <location evidence="3">Cytoplasm</location>
    </subcellularLocation>
    <text evidence="3">MYD88-associated IRF1 migrates into the nucleus more efficiently than non-MYD88-associated IRF1.</text>
</comment>
<comment type="PTM">
    <text evidence="2">Phosphorylated by CK2 and this positively regulates its activity.</text>
</comment>
<comment type="PTM">
    <text evidence="2 3">Sumoylation represses the transcriptional activity and displays enhanced resistance to protein degradation (By similarity). Sumoylated by UBE2I/UBC9 and SUMO1 (By similarity). Inactivates the tumor suppressor activity (By similarity). Elevated levels in tumor cells (By similarity). Major site is Lys-276 (By similarity). Sumoylation is enhanced by PIAS3 (By similarity). Desumoylated by SENP1 in tumor cells and appears to compete with ubiquitination on C-terminal sites (By similarity).</text>
</comment>
<comment type="PTM">
    <text evidence="2">Ubiquitinated in a SPOP-depedent manner. Appears to compete with sumoylation on C-terminal sites (By similarity).</text>
</comment>
<comment type="similarity">
    <text evidence="4">Belongs to the IRF family.</text>
</comment>
<feature type="chain" id="PRO_0000154547" description="Interferon regulatory factor 1">
    <location>
        <begin position="1"/>
        <end position="328"/>
    </location>
</feature>
<feature type="DNA-binding region" description="IRF tryptophan pentad repeat" evidence="4">
    <location>
        <begin position="5"/>
        <end position="113"/>
    </location>
</feature>
<feature type="region of interest" description="Disordered" evidence="5">
    <location>
        <begin position="92"/>
        <end position="164"/>
    </location>
</feature>
<feature type="compositionally biased region" description="Low complexity" evidence="5">
    <location>
        <begin position="141"/>
        <end position="157"/>
    </location>
</feature>
<feature type="modified residue" description="N6-acetyllysine" evidence="2">
    <location>
        <position position="78"/>
    </location>
</feature>
<feature type="cross-link" description="Glycyl lysine isopeptide (Lys-Gly) (interchain with G-Cter in SUMO)" evidence="1">
    <location>
        <position position="276"/>
    </location>
</feature>
<feature type="cross-link" description="Glycyl lysine isopeptide (Lys-Gly) (interchain with G-Cter in SUMO)" evidence="1">
    <location>
        <position position="300"/>
    </location>
</feature>
<dbReference type="EMBL" id="M34253">
    <property type="protein sequence ID" value="AAA41450.1"/>
    <property type="molecule type" value="mRNA"/>
</dbReference>
<dbReference type="PIR" id="A36330">
    <property type="entry name" value="A36330"/>
</dbReference>
<dbReference type="RefSeq" id="NP_036723.1">
    <property type="nucleotide sequence ID" value="NM_012591.1"/>
</dbReference>
<dbReference type="SMR" id="P23570"/>
<dbReference type="FunCoup" id="P23570">
    <property type="interactions" value="959"/>
</dbReference>
<dbReference type="STRING" id="10116.ENSRNOP00000010968"/>
<dbReference type="ChEMBL" id="CHEMBL5927"/>
<dbReference type="PhosphoSitePlus" id="P23570"/>
<dbReference type="PaxDb" id="10116-ENSRNOP00000010968"/>
<dbReference type="GeneID" id="24508"/>
<dbReference type="KEGG" id="rno:24508"/>
<dbReference type="UCSC" id="RGD:2920">
    <property type="organism name" value="rat"/>
</dbReference>
<dbReference type="AGR" id="RGD:2920"/>
<dbReference type="CTD" id="3659"/>
<dbReference type="RGD" id="2920">
    <property type="gene designation" value="Irf1"/>
</dbReference>
<dbReference type="eggNOG" id="ENOG502QVVN">
    <property type="taxonomic scope" value="Eukaryota"/>
</dbReference>
<dbReference type="InParanoid" id="P23570"/>
<dbReference type="PhylomeDB" id="P23570"/>
<dbReference type="PRO" id="PR:P23570"/>
<dbReference type="Proteomes" id="UP000002494">
    <property type="component" value="Unplaced"/>
</dbReference>
<dbReference type="GO" id="GO:0000785">
    <property type="term" value="C:chromatin"/>
    <property type="evidence" value="ECO:0000266"/>
    <property type="project" value="RGD"/>
</dbReference>
<dbReference type="GO" id="GO:0005737">
    <property type="term" value="C:cytoplasm"/>
    <property type="evidence" value="ECO:0000250"/>
    <property type="project" value="UniProtKB"/>
</dbReference>
<dbReference type="GO" id="GO:0005634">
    <property type="term" value="C:nucleus"/>
    <property type="evidence" value="ECO:0000266"/>
    <property type="project" value="RGD"/>
</dbReference>
<dbReference type="GO" id="GO:0003677">
    <property type="term" value="F:DNA binding"/>
    <property type="evidence" value="ECO:0000266"/>
    <property type="project" value="RGD"/>
</dbReference>
<dbReference type="GO" id="GO:0001228">
    <property type="term" value="F:DNA-binding transcription activator activity, RNA polymerase II-specific"/>
    <property type="evidence" value="ECO:0000266"/>
    <property type="project" value="RGD"/>
</dbReference>
<dbReference type="GO" id="GO:0003700">
    <property type="term" value="F:DNA-binding transcription factor activity"/>
    <property type="evidence" value="ECO:0000266"/>
    <property type="project" value="RGD"/>
</dbReference>
<dbReference type="GO" id="GO:0000981">
    <property type="term" value="F:DNA-binding transcription factor activity, RNA polymerase II-specific"/>
    <property type="evidence" value="ECO:0000250"/>
    <property type="project" value="UniProtKB"/>
</dbReference>
<dbReference type="GO" id="GO:0000978">
    <property type="term" value="F:RNA polymerase II cis-regulatory region sequence-specific DNA binding"/>
    <property type="evidence" value="ECO:0000266"/>
    <property type="project" value="RGD"/>
</dbReference>
<dbReference type="GO" id="GO:0000977">
    <property type="term" value="F:RNA polymerase II transcription regulatory region sequence-specific DNA binding"/>
    <property type="evidence" value="ECO:0000266"/>
    <property type="project" value="RGD"/>
</dbReference>
<dbReference type="GO" id="GO:0043565">
    <property type="term" value="F:sequence-specific DNA binding"/>
    <property type="evidence" value="ECO:0000314"/>
    <property type="project" value="RGD"/>
</dbReference>
<dbReference type="GO" id="GO:0000976">
    <property type="term" value="F:transcription cis-regulatory region binding"/>
    <property type="evidence" value="ECO:0000250"/>
    <property type="project" value="UniProtKB"/>
</dbReference>
<dbReference type="GO" id="GO:0006915">
    <property type="term" value="P:apoptotic process"/>
    <property type="evidence" value="ECO:0000250"/>
    <property type="project" value="UniProtKB"/>
</dbReference>
<dbReference type="GO" id="GO:0007249">
    <property type="term" value="P:canonical NF-kappaB signal transduction"/>
    <property type="evidence" value="ECO:0000315"/>
    <property type="project" value="RGD"/>
</dbReference>
<dbReference type="GO" id="GO:0043374">
    <property type="term" value="P:CD8-positive, alpha-beta T cell differentiation"/>
    <property type="evidence" value="ECO:0000266"/>
    <property type="project" value="RGD"/>
</dbReference>
<dbReference type="GO" id="GO:0071360">
    <property type="term" value="P:cellular response to exogenous dsRNA"/>
    <property type="evidence" value="ECO:0000270"/>
    <property type="project" value="RGD"/>
</dbReference>
<dbReference type="GO" id="GO:0035458">
    <property type="term" value="P:cellular response to interferon-beta"/>
    <property type="evidence" value="ECO:0000270"/>
    <property type="project" value="RGD"/>
</dbReference>
<dbReference type="GO" id="GO:0071260">
    <property type="term" value="P:cellular response to mechanical stimulus"/>
    <property type="evidence" value="ECO:0000266"/>
    <property type="project" value="RGD"/>
</dbReference>
<dbReference type="GO" id="GO:0071375">
    <property type="term" value="P:cellular response to peptide hormone stimulus"/>
    <property type="evidence" value="ECO:0000314"/>
    <property type="project" value="RGD"/>
</dbReference>
<dbReference type="GO" id="GO:0071300">
    <property type="term" value="P:cellular response to retinoic acid"/>
    <property type="evidence" value="ECO:0000270"/>
    <property type="project" value="RGD"/>
</dbReference>
<dbReference type="GO" id="GO:0071356">
    <property type="term" value="P:cellular response to tumor necrosis factor"/>
    <property type="evidence" value="ECO:0000314"/>
    <property type="project" value="RGD"/>
</dbReference>
<dbReference type="GO" id="GO:0071346">
    <property type="term" value="P:cellular response to type II interferon"/>
    <property type="evidence" value="ECO:0000270"/>
    <property type="project" value="RGD"/>
</dbReference>
<dbReference type="GO" id="GO:0051607">
    <property type="term" value="P:defense response to virus"/>
    <property type="evidence" value="ECO:0000250"/>
    <property type="project" value="UniProtKB"/>
</dbReference>
<dbReference type="GO" id="GO:0007565">
    <property type="term" value="P:female pregnancy"/>
    <property type="evidence" value="ECO:0000270"/>
    <property type="project" value="RGD"/>
</dbReference>
<dbReference type="GO" id="GO:0002376">
    <property type="term" value="P:immune system process"/>
    <property type="evidence" value="ECO:0000318"/>
    <property type="project" value="GO_Central"/>
</dbReference>
<dbReference type="GO" id="GO:0045892">
    <property type="term" value="P:negative regulation of DNA-templated transcription"/>
    <property type="evidence" value="ECO:0000250"/>
    <property type="project" value="UniProtKB"/>
</dbReference>
<dbReference type="GO" id="GO:0045590">
    <property type="term" value="P:negative regulation of regulatory T cell differentiation"/>
    <property type="evidence" value="ECO:0000250"/>
    <property type="project" value="UniProtKB"/>
</dbReference>
<dbReference type="GO" id="GO:0043065">
    <property type="term" value="P:positive regulation of apoptotic process"/>
    <property type="evidence" value="ECO:0000315"/>
    <property type="project" value="RGD"/>
</dbReference>
<dbReference type="GO" id="GO:0045893">
    <property type="term" value="P:positive regulation of DNA-templated transcription"/>
    <property type="evidence" value="ECO:0000250"/>
    <property type="project" value="UniProtKB"/>
</dbReference>
<dbReference type="GO" id="GO:0032728">
    <property type="term" value="P:positive regulation of interferon-beta production"/>
    <property type="evidence" value="ECO:0000250"/>
    <property type="project" value="UniProtKB"/>
</dbReference>
<dbReference type="GO" id="GO:0032735">
    <property type="term" value="P:positive regulation of interleukin-12 production"/>
    <property type="evidence" value="ECO:0000266"/>
    <property type="project" value="RGD"/>
</dbReference>
<dbReference type="GO" id="GO:0045944">
    <property type="term" value="P:positive regulation of transcription by RNA polymerase II"/>
    <property type="evidence" value="ECO:0000315"/>
    <property type="project" value="RGD"/>
</dbReference>
<dbReference type="GO" id="GO:0032481">
    <property type="term" value="P:positive regulation of type I interferon production"/>
    <property type="evidence" value="ECO:0000250"/>
    <property type="project" value="UniProtKB"/>
</dbReference>
<dbReference type="GO" id="GO:2000564">
    <property type="term" value="P:regulation of CD8-positive, alpha-beta T cell proliferation"/>
    <property type="evidence" value="ECO:0000250"/>
    <property type="project" value="UniProtKB"/>
</dbReference>
<dbReference type="GO" id="GO:0051726">
    <property type="term" value="P:regulation of cell cycle"/>
    <property type="evidence" value="ECO:0000250"/>
    <property type="project" value="UniProtKB"/>
</dbReference>
<dbReference type="GO" id="GO:0042127">
    <property type="term" value="P:regulation of cell population proliferation"/>
    <property type="evidence" value="ECO:0000303"/>
    <property type="project" value="RGD"/>
</dbReference>
<dbReference type="GO" id="GO:0006355">
    <property type="term" value="P:regulation of DNA-templated transcription"/>
    <property type="evidence" value="ECO:0000304"/>
    <property type="project" value="RGD"/>
</dbReference>
<dbReference type="GO" id="GO:0010468">
    <property type="term" value="P:regulation of gene expression"/>
    <property type="evidence" value="ECO:0000266"/>
    <property type="project" value="RGD"/>
</dbReference>
<dbReference type="GO" id="GO:0034124">
    <property type="term" value="P:regulation of MyD88-dependent toll-like receptor signaling pathway"/>
    <property type="evidence" value="ECO:0000250"/>
    <property type="project" value="UniProtKB"/>
</dbReference>
<dbReference type="GO" id="GO:0006357">
    <property type="term" value="P:regulation of transcription by RNA polymerase II"/>
    <property type="evidence" value="ECO:0000318"/>
    <property type="project" value="GO_Central"/>
</dbReference>
<dbReference type="GO" id="GO:0060416">
    <property type="term" value="P:response to growth hormone"/>
    <property type="evidence" value="ECO:0000314"/>
    <property type="project" value="RGD"/>
</dbReference>
<dbReference type="GO" id="GO:0006366">
    <property type="term" value="P:transcription by RNA polymerase II"/>
    <property type="evidence" value="ECO:0000266"/>
    <property type="project" value="RGD"/>
</dbReference>
<dbReference type="GO" id="GO:0060333">
    <property type="term" value="P:type II interferon-mediated signaling pathway"/>
    <property type="evidence" value="ECO:0000250"/>
    <property type="project" value="UniProtKB"/>
</dbReference>
<dbReference type="CDD" id="cd00103">
    <property type="entry name" value="IRF"/>
    <property type="match status" value="1"/>
</dbReference>
<dbReference type="FunFam" id="1.10.10.10:FF:000065">
    <property type="entry name" value="Interferon regulatory factor"/>
    <property type="match status" value="1"/>
</dbReference>
<dbReference type="Gene3D" id="1.10.10.10">
    <property type="entry name" value="Winged helix-like DNA-binding domain superfamily/Winged helix DNA-binding domain"/>
    <property type="match status" value="1"/>
</dbReference>
<dbReference type="InterPro" id="IPR019817">
    <property type="entry name" value="Interferon_reg_fac_CS"/>
</dbReference>
<dbReference type="InterPro" id="IPR001346">
    <property type="entry name" value="Interferon_reg_fact_DNA-bd_dom"/>
</dbReference>
<dbReference type="InterPro" id="IPR017431">
    <property type="entry name" value="IRF1/IRF2"/>
</dbReference>
<dbReference type="InterPro" id="IPR036388">
    <property type="entry name" value="WH-like_DNA-bd_sf"/>
</dbReference>
<dbReference type="InterPro" id="IPR036390">
    <property type="entry name" value="WH_DNA-bd_sf"/>
</dbReference>
<dbReference type="PANTHER" id="PTHR11949">
    <property type="entry name" value="INTERFERON REGULATORY FACTOR"/>
    <property type="match status" value="1"/>
</dbReference>
<dbReference type="PANTHER" id="PTHR11949:SF3">
    <property type="entry name" value="INTERFERON REGULATORY FACTOR 1"/>
    <property type="match status" value="1"/>
</dbReference>
<dbReference type="Pfam" id="PF00605">
    <property type="entry name" value="IRF"/>
    <property type="match status" value="1"/>
</dbReference>
<dbReference type="PIRSF" id="PIRSF038196">
    <property type="entry name" value="IFN_RF1/2"/>
    <property type="match status" value="1"/>
</dbReference>
<dbReference type="PRINTS" id="PR00267">
    <property type="entry name" value="INTFRNREGFCT"/>
</dbReference>
<dbReference type="SMART" id="SM00348">
    <property type="entry name" value="IRF"/>
    <property type="match status" value="1"/>
</dbReference>
<dbReference type="SUPFAM" id="SSF46785">
    <property type="entry name" value="Winged helix' DNA-binding domain"/>
    <property type="match status" value="1"/>
</dbReference>
<dbReference type="PROSITE" id="PS00601">
    <property type="entry name" value="IRF_1"/>
    <property type="match status" value="1"/>
</dbReference>
<dbReference type="PROSITE" id="PS51507">
    <property type="entry name" value="IRF_2"/>
    <property type="match status" value="1"/>
</dbReference>
<gene>
    <name type="primary">Irf1</name>
</gene>
<accession>P23570</accession>
<organism>
    <name type="scientific">Rattus norvegicus</name>
    <name type="common">Rat</name>
    <dbReference type="NCBI Taxonomy" id="10116"/>
    <lineage>
        <taxon>Eukaryota</taxon>
        <taxon>Metazoa</taxon>
        <taxon>Chordata</taxon>
        <taxon>Craniata</taxon>
        <taxon>Vertebrata</taxon>
        <taxon>Euteleostomi</taxon>
        <taxon>Mammalia</taxon>
        <taxon>Eutheria</taxon>
        <taxon>Euarchontoglires</taxon>
        <taxon>Glires</taxon>
        <taxon>Rodentia</taxon>
        <taxon>Myomorpha</taxon>
        <taxon>Muroidea</taxon>
        <taxon>Muridae</taxon>
        <taxon>Murinae</taxon>
        <taxon>Rattus</taxon>
    </lineage>
</organism>
<reference key="1">
    <citation type="journal article" date="1990" name="Mol. Cell. Biol.">
        <title>Interferon-regulatory factor 1 is an immediate-early gene under transcriptional regulation by prolactin in Nb2 T cells.</title>
        <authorList>
            <person name="Yu-Lee L.Y."/>
            <person name="Hrachovy J.A."/>
            <person name="Stevens A.M."/>
            <person name="Schwarz L.A."/>
        </authorList>
    </citation>
    <scope>NUCLEOTIDE SEQUENCE [MRNA]</scope>
</reference>
<sequence>MPITRMRMRPWLEMQINSNQIPGLSWINKEEMIFQIPWKHAALHGWDINKDACLFRSWAIHTGRYKAGEKEPDPKTWKANFRCAMNSLPDIEEVKDQSRNKGSSAVRVYRMLPPLTKNQRKERKSKSSRDTKSKTKRKLCGDSSPDTLSDGLSSSTLPDDHSSYTAQGYLGQDLDMDRDITPALSPCVVSSSLSEWHMQMDIMPDSTTDLYNLQVSPMPSTSEAATDEDEEGKLPEDIMKLFEQSEWQPTHVDGKGYLLNEPGAQLSTVYGDFSCKEEPEIDSPGGDIEIGIQRVFTEMKNMDPVMWMDTLLGNSTRPPSIQAIPCAP</sequence>
<evidence type="ECO:0000250" key="1"/>
<evidence type="ECO:0000250" key="2">
    <source>
        <dbReference type="UniProtKB" id="P10914"/>
    </source>
</evidence>
<evidence type="ECO:0000250" key="3">
    <source>
        <dbReference type="UniProtKB" id="P15314"/>
    </source>
</evidence>
<evidence type="ECO:0000255" key="4">
    <source>
        <dbReference type="PROSITE-ProRule" id="PRU00840"/>
    </source>
</evidence>
<evidence type="ECO:0000256" key="5">
    <source>
        <dbReference type="SAM" id="MobiDB-lite"/>
    </source>
</evidence>
<name>IRF1_RAT</name>
<proteinExistence type="evidence at transcript level"/>
<keyword id="KW-0007">Acetylation</keyword>
<keyword id="KW-0010">Activator</keyword>
<keyword id="KW-0051">Antiviral defense</keyword>
<keyword id="KW-0963">Cytoplasm</keyword>
<keyword id="KW-0238">DNA-binding</keyword>
<keyword id="KW-0391">Immunity</keyword>
<keyword id="KW-0399">Innate immunity</keyword>
<keyword id="KW-1017">Isopeptide bond</keyword>
<keyword id="KW-0539">Nucleus</keyword>
<keyword id="KW-0597">Phosphoprotein</keyword>
<keyword id="KW-1185">Reference proteome</keyword>
<keyword id="KW-0678">Repressor</keyword>
<keyword id="KW-0804">Transcription</keyword>
<keyword id="KW-0805">Transcription regulation</keyword>
<keyword id="KW-0832">Ubl conjugation</keyword>
<protein>
    <recommendedName>
        <fullName>Interferon regulatory factor 1</fullName>
        <shortName>IRF-1</shortName>
    </recommendedName>
</protein>